<sequence>MSNHAWILLGIFLVVLLLTVKPLGTYIANVMEGRFRLAGKIESPIYRLCGIRPDEEMGWLKYACAILLFNVLGVLAVYALQRLQAELPLNPQVFPAVSPDSAFNTAISFATNTNWQGYVGEATMSYLTQMLALAVQNFFSAATGIVVVIALIRGFARHTAKTFGNAWVDLTRITLHVLLPISIIYAVFLTGQGVIQNFNAYKDVTTLEVTSFDNPKLDDAGQPLKDDKGAVVTEPAQTQTQTLAMGPVASQEAIKMLGTNGGGFMNANSAHPYENPTPLSNFIQMLSIFLIPAALCFTFGRIVGDTRQGWAVLAAMTLMFVALAYTAMHFEQQANPLLTQLGVDPASGNMEGKETRFGIGDSGLFATITTLASCGAVNAMHDSFTPLGGLVPLIDMQLGEVVFGGVGTGLYGMLVFAIMAVFIAGLMIGRTPEYLGKKIEAFEMKMVSIAILVTPLLVLVGTAIAVMLADGKAGIANPGAHGFSEILYAFTSAANNNGSAFAGLSANTPFYNVMLGIAMWFGRFGVIVPVLAIAGSLAAKKRIAVGAGTLPTHGPLFVTLLIGTVLLVGLLNYVPALALGPVIEHLVLWAAH</sequence>
<gene>
    <name evidence="1" type="primary">kdpA</name>
    <name type="ordered locus">Daro_1087</name>
</gene>
<proteinExistence type="inferred from homology"/>
<accession>Q47H38</accession>
<keyword id="KW-0997">Cell inner membrane</keyword>
<keyword id="KW-1003">Cell membrane</keyword>
<keyword id="KW-0406">Ion transport</keyword>
<keyword id="KW-0472">Membrane</keyword>
<keyword id="KW-0630">Potassium</keyword>
<keyword id="KW-0633">Potassium transport</keyword>
<keyword id="KW-0812">Transmembrane</keyword>
<keyword id="KW-1133">Transmembrane helix</keyword>
<keyword id="KW-0813">Transport</keyword>
<protein>
    <recommendedName>
        <fullName evidence="1">Potassium-transporting ATPase potassium-binding subunit</fullName>
    </recommendedName>
    <alternativeName>
        <fullName evidence="1">ATP phosphohydrolase [potassium-transporting] A chain</fullName>
    </alternativeName>
    <alternativeName>
        <fullName evidence="1">Potassium-binding and translocating subunit A</fullName>
    </alternativeName>
    <alternativeName>
        <fullName evidence="1">Potassium-translocating ATPase A chain</fullName>
    </alternativeName>
</protein>
<comment type="function">
    <text evidence="1">Part of the high-affinity ATP-driven potassium transport (or Kdp) system, which catalyzes the hydrolysis of ATP coupled with the electrogenic transport of potassium into the cytoplasm. This subunit binds the periplasmic potassium ions and delivers the ions to the membrane domain of KdpB through an intramembrane tunnel.</text>
</comment>
<comment type="subunit">
    <text evidence="1">The system is composed of three essential subunits: KdpA, KdpB and KdpC.</text>
</comment>
<comment type="subcellular location">
    <subcellularLocation>
        <location evidence="1">Cell inner membrane</location>
        <topology evidence="1">Multi-pass membrane protein</topology>
    </subcellularLocation>
</comment>
<comment type="similarity">
    <text evidence="1">Belongs to the KdpA family.</text>
</comment>
<dbReference type="EMBL" id="CP000089">
    <property type="protein sequence ID" value="AAZ45843.1"/>
    <property type="molecule type" value="Genomic_DNA"/>
</dbReference>
<dbReference type="SMR" id="Q47H38"/>
<dbReference type="STRING" id="159087.Daro_1087"/>
<dbReference type="KEGG" id="dar:Daro_1087"/>
<dbReference type="eggNOG" id="COG2060">
    <property type="taxonomic scope" value="Bacteria"/>
</dbReference>
<dbReference type="HOGENOM" id="CLU_018614_3_0_4"/>
<dbReference type="OrthoDB" id="9763796at2"/>
<dbReference type="GO" id="GO:0005886">
    <property type="term" value="C:plasma membrane"/>
    <property type="evidence" value="ECO:0007669"/>
    <property type="project" value="UniProtKB-SubCell"/>
</dbReference>
<dbReference type="GO" id="GO:0008556">
    <property type="term" value="F:P-type potassium transmembrane transporter activity"/>
    <property type="evidence" value="ECO:0007669"/>
    <property type="project" value="InterPro"/>
</dbReference>
<dbReference type="GO" id="GO:0030955">
    <property type="term" value="F:potassium ion binding"/>
    <property type="evidence" value="ECO:0007669"/>
    <property type="project" value="UniProtKB-UniRule"/>
</dbReference>
<dbReference type="HAMAP" id="MF_00275">
    <property type="entry name" value="KdpA"/>
    <property type="match status" value="1"/>
</dbReference>
<dbReference type="InterPro" id="IPR004623">
    <property type="entry name" value="KdpA"/>
</dbReference>
<dbReference type="NCBIfam" id="TIGR00680">
    <property type="entry name" value="kdpA"/>
    <property type="match status" value="1"/>
</dbReference>
<dbReference type="PANTHER" id="PTHR30607">
    <property type="entry name" value="POTASSIUM-TRANSPORTING ATPASE A CHAIN"/>
    <property type="match status" value="1"/>
</dbReference>
<dbReference type="PANTHER" id="PTHR30607:SF2">
    <property type="entry name" value="POTASSIUM-TRANSPORTING ATPASE POTASSIUM-BINDING SUBUNIT"/>
    <property type="match status" value="1"/>
</dbReference>
<dbReference type="Pfam" id="PF03814">
    <property type="entry name" value="KdpA"/>
    <property type="match status" value="1"/>
</dbReference>
<dbReference type="PIRSF" id="PIRSF001294">
    <property type="entry name" value="K_ATPaseA"/>
    <property type="match status" value="1"/>
</dbReference>
<reference key="1">
    <citation type="journal article" date="2009" name="BMC Genomics">
        <title>Metabolic analysis of the soil microbe Dechloromonas aromatica str. RCB: indications of a surprisingly complex life-style and cryptic anaerobic pathways for aromatic degradation.</title>
        <authorList>
            <person name="Salinero K.K."/>
            <person name="Keller K."/>
            <person name="Feil W.S."/>
            <person name="Feil H."/>
            <person name="Trong S."/>
            <person name="Di Bartolo G."/>
            <person name="Lapidus A."/>
        </authorList>
    </citation>
    <scope>NUCLEOTIDE SEQUENCE [LARGE SCALE GENOMIC DNA]</scope>
    <source>
        <strain>RCB</strain>
    </source>
</reference>
<name>KDPA_DECAR</name>
<organism>
    <name type="scientific">Dechloromonas aromatica (strain RCB)</name>
    <dbReference type="NCBI Taxonomy" id="159087"/>
    <lineage>
        <taxon>Bacteria</taxon>
        <taxon>Pseudomonadati</taxon>
        <taxon>Pseudomonadota</taxon>
        <taxon>Betaproteobacteria</taxon>
        <taxon>Rhodocyclales</taxon>
        <taxon>Azonexaceae</taxon>
        <taxon>Dechloromonas</taxon>
    </lineage>
</organism>
<evidence type="ECO:0000255" key="1">
    <source>
        <dbReference type="HAMAP-Rule" id="MF_00275"/>
    </source>
</evidence>
<feature type="chain" id="PRO_1000022218" description="Potassium-transporting ATPase potassium-binding subunit">
    <location>
        <begin position="1"/>
        <end position="592"/>
    </location>
</feature>
<feature type="transmembrane region" description="Helical" evidence="1">
    <location>
        <begin position="7"/>
        <end position="27"/>
    </location>
</feature>
<feature type="transmembrane region" description="Helical" evidence="1">
    <location>
        <begin position="60"/>
        <end position="80"/>
    </location>
</feature>
<feature type="transmembrane region" description="Helical" evidence="1">
    <location>
        <begin position="132"/>
        <end position="152"/>
    </location>
</feature>
<feature type="transmembrane region" description="Helical" evidence="1">
    <location>
        <begin position="175"/>
        <end position="195"/>
    </location>
</feature>
<feature type="transmembrane region" description="Helical" evidence="1">
    <location>
        <begin position="279"/>
        <end position="299"/>
    </location>
</feature>
<feature type="transmembrane region" description="Helical" evidence="1">
    <location>
        <begin position="310"/>
        <end position="330"/>
    </location>
</feature>
<feature type="transmembrane region" description="Helical" evidence="1">
    <location>
        <begin position="409"/>
        <end position="429"/>
    </location>
</feature>
<feature type="transmembrane region" description="Helical" evidence="1">
    <location>
        <begin position="449"/>
        <end position="469"/>
    </location>
</feature>
<feature type="transmembrane region" description="Helical" evidence="1">
    <location>
        <begin position="513"/>
        <end position="533"/>
    </location>
</feature>
<feature type="transmembrane region" description="Helical" evidence="1">
    <location>
        <begin position="556"/>
        <end position="576"/>
    </location>
</feature>